<gene>
    <name evidence="3" type="primary">pduW</name>
    <name type="ordered locus">ROD_21431</name>
</gene>
<feature type="chain" id="PRO_0000398197" description="Propionate kinase">
    <location>
        <begin position="1"/>
        <end position="403"/>
    </location>
</feature>
<name>PDUW_CITRI</name>
<sequence length="403" mass="43445">MSHKIMAINAGSSSLKFQLLDMPQGKLLCQGLIERIGMANAGITLKAQEQKWQQTAPVADHREAVTLLLDMLTGHGIIRSIAEIEGVGHRVAHGGETFKDSARVTDETLAEIERLAELAPLHNPVNLLGINVFRQLLPDVPAVAVFDTAFHQTLNEAAYIYPLPWRYYEEFGIRRYGFHGTSHKYVSATLAEKLGVPLSALRVVSCHLGNGSSLCAIKGGKSVNTSMGFTPQSGVMMGTRSGDIDPSILPWLAQREGKTPQQLNQLLNNESGLLGVSGVSHDYRDVEQAADAGNPRAALALTLFAERIRATIGSYIMQMGGLDALVFTGGIGENSARARAAICQNLQFLGLSVDEAKNQRNATFIQADHALVKVAVINTNEELMIARDVMRIALAETPVAASA</sequence>
<accession>D2TPS5</accession>
<keyword id="KW-0067">ATP-binding</keyword>
<keyword id="KW-0963">Cytoplasm</keyword>
<keyword id="KW-0418">Kinase</keyword>
<keyword id="KW-0547">Nucleotide-binding</keyword>
<keyword id="KW-1185">Reference proteome</keyword>
<keyword id="KW-0808">Transferase</keyword>
<comment type="function">
    <text evidence="2">Works with phosphate acetyltransferase (pta) to capture exogenous propionate and regenerate propionyl-CoA during degradation of 1,2-propanediol (1,2-PD).</text>
</comment>
<comment type="catalytic activity">
    <reaction evidence="3">
        <text>propanoate + ATP = propanoyl phosphate + ADP</text>
        <dbReference type="Rhea" id="RHEA:23148"/>
        <dbReference type="ChEBI" id="CHEBI:17272"/>
        <dbReference type="ChEBI" id="CHEBI:30616"/>
        <dbReference type="ChEBI" id="CHEBI:58933"/>
        <dbReference type="ChEBI" id="CHEBI:456216"/>
        <dbReference type="EC" id="2.7.2.15"/>
    </reaction>
</comment>
<comment type="pathway">
    <text evidence="1 4">Polyol metabolism; 1,2-propanediol degradation.</text>
</comment>
<comment type="subcellular location">
    <subcellularLocation>
        <location evidence="3">Cytoplasm</location>
    </subcellularLocation>
</comment>
<comment type="similarity">
    <text evidence="3">Belongs to the acetokinase family. PduW subfamily.</text>
</comment>
<proteinExistence type="inferred from homology"/>
<dbReference type="EC" id="2.7.2.15" evidence="3"/>
<dbReference type="EMBL" id="FN543502">
    <property type="protein sequence ID" value="CBG88892.1"/>
    <property type="molecule type" value="Genomic_DNA"/>
</dbReference>
<dbReference type="RefSeq" id="WP_012906348.1">
    <property type="nucleotide sequence ID" value="NC_013716.1"/>
</dbReference>
<dbReference type="SMR" id="D2TPS5"/>
<dbReference type="STRING" id="637910.ROD_21431"/>
<dbReference type="KEGG" id="cro:ROD_21431"/>
<dbReference type="eggNOG" id="COG0282">
    <property type="taxonomic scope" value="Bacteria"/>
</dbReference>
<dbReference type="HOGENOM" id="CLU_020352_0_1_6"/>
<dbReference type="OrthoDB" id="9802453at2"/>
<dbReference type="UniPathway" id="UPA00621"/>
<dbReference type="Proteomes" id="UP000001889">
    <property type="component" value="Chromosome"/>
</dbReference>
<dbReference type="GO" id="GO:0005737">
    <property type="term" value="C:cytoplasm"/>
    <property type="evidence" value="ECO:0007669"/>
    <property type="project" value="UniProtKB-SubCell"/>
</dbReference>
<dbReference type="GO" id="GO:0008776">
    <property type="term" value="F:acetate kinase activity"/>
    <property type="evidence" value="ECO:0007669"/>
    <property type="project" value="TreeGrafter"/>
</dbReference>
<dbReference type="GO" id="GO:0005524">
    <property type="term" value="F:ATP binding"/>
    <property type="evidence" value="ECO:0007669"/>
    <property type="project" value="UniProtKB-KW"/>
</dbReference>
<dbReference type="GO" id="GO:0008980">
    <property type="term" value="F:propionate kinase activity"/>
    <property type="evidence" value="ECO:0007669"/>
    <property type="project" value="UniProtKB-UniRule"/>
</dbReference>
<dbReference type="GO" id="GO:0006083">
    <property type="term" value="P:acetate metabolic process"/>
    <property type="evidence" value="ECO:0007669"/>
    <property type="project" value="TreeGrafter"/>
</dbReference>
<dbReference type="GO" id="GO:0051144">
    <property type="term" value="P:propanediol catabolic process"/>
    <property type="evidence" value="ECO:0007669"/>
    <property type="project" value="UniProtKB-UniPathway"/>
</dbReference>
<dbReference type="GO" id="GO:0019543">
    <property type="term" value="P:propionate catabolic process"/>
    <property type="evidence" value="ECO:0007669"/>
    <property type="project" value="InterPro"/>
</dbReference>
<dbReference type="CDD" id="cd24010">
    <property type="entry name" value="ASKHA_NBD_AcK_PK"/>
    <property type="match status" value="1"/>
</dbReference>
<dbReference type="Gene3D" id="3.30.420.40">
    <property type="match status" value="2"/>
</dbReference>
<dbReference type="HAMAP" id="MF_00020">
    <property type="entry name" value="Acetate_kinase"/>
    <property type="match status" value="1"/>
</dbReference>
<dbReference type="HAMAP" id="MF_01882">
    <property type="entry name" value="Propion_kin_subfam2"/>
    <property type="match status" value="1"/>
</dbReference>
<dbReference type="InterPro" id="IPR004372">
    <property type="entry name" value="Ac/propionate_kinase"/>
</dbReference>
<dbReference type="InterPro" id="IPR000890">
    <property type="entry name" value="Aliphatic_acid_kin_short-chain"/>
</dbReference>
<dbReference type="InterPro" id="IPR023865">
    <property type="entry name" value="Aliphatic_acid_kinase_CS"/>
</dbReference>
<dbReference type="InterPro" id="IPR043129">
    <property type="entry name" value="ATPase_NBD"/>
</dbReference>
<dbReference type="InterPro" id="IPR024896">
    <property type="entry name" value="Propionate_kinase_PduW"/>
</dbReference>
<dbReference type="NCBIfam" id="TIGR00016">
    <property type="entry name" value="ackA"/>
    <property type="match status" value="1"/>
</dbReference>
<dbReference type="NCBIfam" id="NF009063">
    <property type="entry name" value="PRK12397.1"/>
    <property type="match status" value="1"/>
</dbReference>
<dbReference type="PANTHER" id="PTHR21060">
    <property type="entry name" value="ACETATE KINASE"/>
    <property type="match status" value="1"/>
</dbReference>
<dbReference type="PANTHER" id="PTHR21060:SF15">
    <property type="entry name" value="ACETATE KINASE-RELATED"/>
    <property type="match status" value="1"/>
</dbReference>
<dbReference type="Pfam" id="PF00871">
    <property type="entry name" value="Acetate_kinase"/>
    <property type="match status" value="1"/>
</dbReference>
<dbReference type="PIRSF" id="PIRSF000722">
    <property type="entry name" value="Acetate_prop_kin"/>
    <property type="match status" value="1"/>
</dbReference>
<dbReference type="PRINTS" id="PR00471">
    <property type="entry name" value="ACETATEKNASE"/>
</dbReference>
<dbReference type="SUPFAM" id="SSF53067">
    <property type="entry name" value="Actin-like ATPase domain"/>
    <property type="match status" value="2"/>
</dbReference>
<dbReference type="PROSITE" id="PS01075">
    <property type="entry name" value="ACETATE_KINASE_1"/>
    <property type="match status" value="1"/>
</dbReference>
<dbReference type="PROSITE" id="PS01076">
    <property type="entry name" value="ACETATE_KINASE_2"/>
    <property type="match status" value="1"/>
</dbReference>
<evidence type="ECO:0000250" key="1">
    <source>
        <dbReference type="UniProtKB" id="B1VB81"/>
    </source>
</evidence>
<evidence type="ECO:0000250" key="2">
    <source>
        <dbReference type="UniProtKB" id="P74879"/>
    </source>
</evidence>
<evidence type="ECO:0000255" key="3">
    <source>
        <dbReference type="HAMAP-Rule" id="MF_01882"/>
    </source>
</evidence>
<evidence type="ECO:0000305" key="4"/>
<reference key="1">
    <citation type="journal article" date="2010" name="J. Bacteriol.">
        <title>The Citrobacter rodentium genome sequence reveals convergent evolution with human pathogenic Escherichia coli.</title>
        <authorList>
            <person name="Petty N.K."/>
            <person name="Bulgin R."/>
            <person name="Crepin V.F."/>
            <person name="Cerdeno-Tarraga A.M."/>
            <person name="Schroeder G.N."/>
            <person name="Quail M.A."/>
            <person name="Lennard N."/>
            <person name="Corton C."/>
            <person name="Barron A."/>
            <person name="Clark L."/>
            <person name="Toribio A.L."/>
            <person name="Parkhill J."/>
            <person name="Dougan G."/>
            <person name="Frankel G."/>
            <person name="Thomson N.R."/>
        </authorList>
    </citation>
    <scope>NUCLEOTIDE SEQUENCE [LARGE SCALE GENOMIC DNA]</scope>
    <source>
        <strain>ICC168</strain>
    </source>
</reference>
<protein>
    <recommendedName>
        <fullName evidence="3">Propionate kinase</fullName>
        <ecNumber evidence="3">2.7.2.15</ecNumber>
    </recommendedName>
</protein>
<organism>
    <name type="scientific">Citrobacter rodentium (strain ICC168)</name>
    <name type="common">Citrobacter freundii biotype 4280</name>
    <dbReference type="NCBI Taxonomy" id="637910"/>
    <lineage>
        <taxon>Bacteria</taxon>
        <taxon>Pseudomonadati</taxon>
        <taxon>Pseudomonadota</taxon>
        <taxon>Gammaproteobacteria</taxon>
        <taxon>Enterobacterales</taxon>
        <taxon>Enterobacteriaceae</taxon>
        <taxon>Citrobacter</taxon>
    </lineage>
</organism>